<organism>
    <name type="scientific">Haemophilus influenzae (strain PittEE)</name>
    <dbReference type="NCBI Taxonomy" id="374930"/>
    <lineage>
        <taxon>Bacteria</taxon>
        <taxon>Pseudomonadati</taxon>
        <taxon>Pseudomonadota</taxon>
        <taxon>Gammaproteobacteria</taxon>
        <taxon>Pasteurellales</taxon>
        <taxon>Pasteurellaceae</taxon>
        <taxon>Haemophilus</taxon>
    </lineage>
</organism>
<comment type="function">
    <text evidence="1">Modulates RecA activity.</text>
</comment>
<comment type="subcellular location">
    <subcellularLocation>
        <location evidence="1">Cytoplasm</location>
    </subcellularLocation>
</comment>
<comment type="similarity">
    <text evidence="1">Belongs to the RecX family.</text>
</comment>
<dbReference type="EMBL" id="CP000671">
    <property type="protein sequence ID" value="ABQ99123.1"/>
    <property type="molecule type" value="Genomic_DNA"/>
</dbReference>
<dbReference type="SMR" id="A5UEC2"/>
<dbReference type="KEGG" id="hip:CGSHiEE_09160"/>
<dbReference type="HOGENOM" id="CLU_066607_3_2_6"/>
<dbReference type="GO" id="GO:0005737">
    <property type="term" value="C:cytoplasm"/>
    <property type="evidence" value="ECO:0007669"/>
    <property type="project" value="UniProtKB-SubCell"/>
</dbReference>
<dbReference type="GO" id="GO:0006282">
    <property type="term" value="P:regulation of DNA repair"/>
    <property type="evidence" value="ECO:0007669"/>
    <property type="project" value="UniProtKB-UniRule"/>
</dbReference>
<dbReference type="Gene3D" id="1.10.10.10">
    <property type="entry name" value="Winged helix-like DNA-binding domain superfamily/Winged helix DNA-binding domain"/>
    <property type="match status" value="3"/>
</dbReference>
<dbReference type="HAMAP" id="MF_01114">
    <property type="entry name" value="RecX"/>
    <property type="match status" value="1"/>
</dbReference>
<dbReference type="InterPro" id="IPR053926">
    <property type="entry name" value="RecX_HTH_1st"/>
</dbReference>
<dbReference type="InterPro" id="IPR053924">
    <property type="entry name" value="RecX_HTH_2nd"/>
</dbReference>
<dbReference type="InterPro" id="IPR053925">
    <property type="entry name" value="RecX_HTH_3rd"/>
</dbReference>
<dbReference type="InterPro" id="IPR003783">
    <property type="entry name" value="Regulatory_RecX"/>
</dbReference>
<dbReference type="InterPro" id="IPR036388">
    <property type="entry name" value="WH-like_DNA-bd_sf"/>
</dbReference>
<dbReference type="NCBIfam" id="NF001057">
    <property type="entry name" value="PRK00117.3-3"/>
    <property type="match status" value="1"/>
</dbReference>
<dbReference type="PANTHER" id="PTHR33602">
    <property type="entry name" value="REGULATORY PROTEIN RECX FAMILY PROTEIN"/>
    <property type="match status" value="1"/>
</dbReference>
<dbReference type="PANTHER" id="PTHR33602:SF1">
    <property type="entry name" value="REGULATORY PROTEIN RECX FAMILY PROTEIN"/>
    <property type="match status" value="1"/>
</dbReference>
<dbReference type="Pfam" id="PF21982">
    <property type="entry name" value="RecX_HTH1"/>
    <property type="match status" value="1"/>
</dbReference>
<dbReference type="Pfam" id="PF02631">
    <property type="entry name" value="RecX_HTH2"/>
    <property type="match status" value="1"/>
</dbReference>
<dbReference type="Pfam" id="PF21981">
    <property type="entry name" value="RecX_HTH3"/>
    <property type="match status" value="1"/>
</dbReference>
<protein>
    <recommendedName>
        <fullName evidence="1">Regulatory protein RecX</fullName>
    </recommendedName>
</protein>
<name>RECX_HAEIE</name>
<sequence length="152" mass="18327">MSSLAFNYIVNLLSRREYSEFELRNKMQEKNFSEEEIDEALSRCQAKNWQSDRRFSENYLNSRVQKGYGVGRIRQELRQLKGVSSDIIDEVLMESEIDWYEMAENLLRKKFPNYNEQQTPKMKQKIWQYMLSHGFRSDEFADLIGQNQSEWD</sequence>
<proteinExistence type="inferred from homology"/>
<keyword id="KW-0963">Cytoplasm</keyword>
<accession>A5UEC2</accession>
<reference key="1">
    <citation type="journal article" date="2007" name="Genome Biol.">
        <title>Characterization and modeling of the Haemophilus influenzae core and supragenomes based on the complete genomic sequences of Rd and 12 clinical nontypeable strains.</title>
        <authorList>
            <person name="Hogg J.S."/>
            <person name="Hu F.Z."/>
            <person name="Janto B."/>
            <person name="Boissy R."/>
            <person name="Hayes J."/>
            <person name="Keefe R."/>
            <person name="Post J.C."/>
            <person name="Ehrlich G.D."/>
        </authorList>
    </citation>
    <scope>NUCLEOTIDE SEQUENCE [LARGE SCALE GENOMIC DNA]</scope>
    <source>
        <strain>PittEE</strain>
    </source>
</reference>
<feature type="chain" id="PRO_1000065175" description="Regulatory protein RecX">
    <location>
        <begin position="1"/>
        <end position="152"/>
    </location>
</feature>
<evidence type="ECO:0000255" key="1">
    <source>
        <dbReference type="HAMAP-Rule" id="MF_01114"/>
    </source>
</evidence>
<gene>
    <name evidence="1" type="primary">recX</name>
    <name type="ordered locus">CGSHiEE_09160</name>
</gene>